<name>CYB6_MESVI</name>
<reference key="1">
    <citation type="journal article" date="2000" name="Nature">
        <title>Ancestral chloroplast genome in Mesostigma viride reveals an early branch of green plant evolution.</title>
        <authorList>
            <person name="Lemieux C."/>
            <person name="Otis C."/>
            <person name="Turmel M."/>
        </authorList>
    </citation>
    <scope>NUCLEOTIDE SEQUENCE [LARGE SCALE GENOMIC DNA]</scope>
    <source>
        <strain>NIES-296 / KY-14 / CCMP 2046</strain>
    </source>
</reference>
<organism>
    <name type="scientific">Mesostigma viride</name>
    <name type="common">Green alga</name>
    <dbReference type="NCBI Taxonomy" id="41882"/>
    <lineage>
        <taxon>Eukaryota</taxon>
        <taxon>Viridiplantae</taxon>
        <taxon>Streptophyta</taxon>
        <taxon>Mesostigmatophyceae</taxon>
        <taxon>Mesostigmatales</taxon>
        <taxon>Mesostigmataceae</taxon>
        <taxon>Mesostigma</taxon>
    </lineage>
</organism>
<keyword id="KW-0150">Chloroplast</keyword>
<keyword id="KW-0249">Electron transport</keyword>
<keyword id="KW-0349">Heme</keyword>
<keyword id="KW-0408">Iron</keyword>
<keyword id="KW-0472">Membrane</keyword>
<keyword id="KW-0479">Metal-binding</keyword>
<keyword id="KW-0602">Photosynthesis</keyword>
<keyword id="KW-0934">Plastid</keyword>
<keyword id="KW-0793">Thylakoid</keyword>
<keyword id="KW-0812">Transmembrane</keyword>
<keyword id="KW-1133">Transmembrane helix</keyword>
<keyword id="KW-0813">Transport</keyword>
<gene>
    <name evidence="1" type="primary">petB</name>
</gene>
<sequence>MSKVYDWFNDRLEIQGIADDITSKYVPPHVNIFYCIGGITFTCFIMQVASGFAMTFYYRPTVTEAFASVQYIMTDVNFGWLIRSIHKWSASMMVLTMILHVFRVYLTGGFKKPRELTWVTGVILAVCTVSFGVTGYSLPWDQVGYWAVKIVTGVPDAIPVIGAPLVELLRGGVGVGQSTLTRFYSLHTFVLPLLTAVFMLAHFLMIRKQGISGPL</sequence>
<dbReference type="EMBL" id="AF166114">
    <property type="protein sequence ID" value="AAF43798.1"/>
    <property type="molecule type" value="Genomic_DNA"/>
</dbReference>
<dbReference type="RefSeq" id="NP_038357.1">
    <property type="nucleotide sequence ID" value="NC_002186.1"/>
</dbReference>
<dbReference type="SMR" id="Q9MUV3"/>
<dbReference type="GeneID" id="800920"/>
<dbReference type="GO" id="GO:0009535">
    <property type="term" value="C:chloroplast thylakoid membrane"/>
    <property type="evidence" value="ECO:0007669"/>
    <property type="project" value="UniProtKB-SubCell"/>
</dbReference>
<dbReference type="GO" id="GO:0045158">
    <property type="term" value="F:electron transporter, transferring electrons within cytochrome b6/f complex of photosystem II activity"/>
    <property type="evidence" value="ECO:0007669"/>
    <property type="project" value="UniProtKB-UniRule"/>
</dbReference>
<dbReference type="GO" id="GO:0046872">
    <property type="term" value="F:metal ion binding"/>
    <property type="evidence" value="ECO:0007669"/>
    <property type="project" value="UniProtKB-KW"/>
</dbReference>
<dbReference type="GO" id="GO:0016491">
    <property type="term" value="F:oxidoreductase activity"/>
    <property type="evidence" value="ECO:0007669"/>
    <property type="project" value="InterPro"/>
</dbReference>
<dbReference type="GO" id="GO:0015979">
    <property type="term" value="P:photosynthesis"/>
    <property type="evidence" value="ECO:0007669"/>
    <property type="project" value="UniProtKB-UniRule"/>
</dbReference>
<dbReference type="GO" id="GO:0022904">
    <property type="term" value="P:respiratory electron transport chain"/>
    <property type="evidence" value="ECO:0007669"/>
    <property type="project" value="InterPro"/>
</dbReference>
<dbReference type="CDD" id="cd00284">
    <property type="entry name" value="Cytochrome_b_N"/>
    <property type="match status" value="1"/>
</dbReference>
<dbReference type="FunFam" id="1.20.810.10:FF:000001">
    <property type="entry name" value="Cytochrome b6"/>
    <property type="match status" value="1"/>
</dbReference>
<dbReference type="Gene3D" id="1.20.810.10">
    <property type="entry name" value="Cytochrome Bc1 Complex, Chain C"/>
    <property type="match status" value="1"/>
</dbReference>
<dbReference type="HAMAP" id="MF_00633">
    <property type="entry name" value="Cytb6_f_cytb6"/>
    <property type="match status" value="1"/>
</dbReference>
<dbReference type="InterPro" id="IPR005797">
    <property type="entry name" value="Cyt_b/b6_N"/>
</dbReference>
<dbReference type="InterPro" id="IPR023530">
    <property type="entry name" value="Cyt_B6_PetB"/>
</dbReference>
<dbReference type="InterPro" id="IPR027387">
    <property type="entry name" value="Cytb/b6-like_sf"/>
</dbReference>
<dbReference type="InterPro" id="IPR048259">
    <property type="entry name" value="Cytochrome_b_N_euk/bac"/>
</dbReference>
<dbReference type="InterPro" id="IPR016174">
    <property type="entry name" value="Di-haem_cyt_TM"/>
</dbReference>
<dbReference type="NCBIfam" id="NF002990">
    <property type="entry name" value="PRK03735.1"/>
    <property type="match status" value="1"/>
</dbReference>
<dbReference type="PANTHER" id="PTHR19271">
    <property type="entry name" value="CYTOCHROME B"/>
    <property type="match status" value="1"/>
</dbReference>
<dbReference type="PANTHER" id="PTHR19271:SF16">
    <property type="entry name" value="CYTOCHROME B"/>
    <property type="match status" value="1"/>
</dbReference>
<dbReference type="Pfam" id="PF00033">
    <property type="entry name" value="Cytochrome_B"/>
    <property type="match status" value="1"/>
</dbReference>
<dbReference type="PIRSF" id="PIRSF000032">
    <property type="entry name" value="Cytochrome_b6"/>
    <property type="match status" value="1"/>
</dbReference>
<dbReference type="SUPFAM" id="SSF81342">
    <property type="entry name" value="Transmembrane di-heme cytochromes"/>
    <property type="match status" value="1"/>
</dbReference>
<dbReference type="PROSITE" id="PS51002">
    <property type="entry name" value="CYTB_NTER"/>
    <property type="match status" value="1"/>
</dbReference>
<geneLocation type="chloroplast"/>
<comment type="function">
    <text evidence="1">Component of the cytochrome b6-f complex, which mediates electron transfer between photosystem II (PSII) and photosystem I (PSI), cyclic electron flow around PSI, and state transitions.</text>
</comment>
<comment type="cofactor">
    <cofactor evidence="1">
        <name>heme b</name>
        <dbReference type="ChEBI" id="CHEBI:60344"/>
    </cofactor>
    <text evidence="1">Binds 2 heme b groups non-covalently with two histidine residues as axial ligands.</text>
</comment>
<comment type="cofactor">
    <cofactor evidence="1">
        <name>heme c</name>
        <dbReference type="ChEBI" id="CHEBI:61717"/>
    </cofactor>
    <text evidence="1">Binds one heme group covalently by a single cysteine link with no axial amino acid ligand. This heme was named heme ci.</text>
</comment>
<comment type="subunit">
    <text evidence="1">The 4 large subunits of the cytochrome b6-f complex are cytochrome b6, subunit IV (17 kDa polypeptide, PetD), cytochrome f and the Rieske protein, while the 4 small subunits are PetG, PetL, PetM and PetN. The complex functions as a dimer.</text>
</comment>
<comment type="subcellular location">
    <subcellularLocation>
        <location evidence="1">Plastid</location>
        <location evidence="1">Chloroplast thylakoid membrane</location>
        <topology evidence="1">Multi-pass membrane protein</topology>
    </subcellularLocation>
</comment>
<comment type="miscellaneous">
    <text evidence="1">Heme 1 (or BH or b566) is high-potential and absorbs at about 566 nm, and heme 2 (or BL or b562) is low-potential and absorbs at about 562 nm.</text>
</comment>
<comment type="similarity">
    <text evidence="1">Belongs to the cytochrome b family. PetB subfamily.</text>
</comment>
<proteinExistence type="inferred from homology"/>
<accession>Q9MUV3</accession>
<evidence type="ECO:0000255" key="1">
    <source>
        <dbReference type="HAMAP-Rule" id="MF_00633"/>
    </source>
</evidence>
<protein>
    <recommendedName>
        <fullName evidence="1">Cytochrome b6</fullName>
    </recommendedName>
</protein>
<feature type="chain" id="PRO_0000061803" description="Cytochrome b6">
    <location>
        <begin position="1"/>
        <end position="215"/>
    </location>
</feature>
<feature type="transmembrane region" description="Helical" evidence="1">
    <location>
        <begin position="32"/>
        <end position="52"/>
    </location>
</feature>
<feature type="transmembrane region" description="Helical" evidence="1">
    <location>
        <begin position="90"/>
        <end position="110"/>
    </location>
</feature>
<feature type="transmembrane region" description="Helical" evidence="1">
    <location>
        <begin position="116"/>
        <end position="136"/>
    </location>
</feature>
<feature type="transmembrane region" description="Helical" evidence="1">
    <location>
        <begin position="186"/>
        <end position="206"/>
    </location>
</feature>
<feature type="binding site" description="covalent" evidence="1">
    <location>
        <position position="35"/>
    </location>
    <ligand>
        <name>heme c</name>
        <dbReference type="ChEBI" id="CHEBI:61717"/>
    </ligand>
</feature>
<feature type="binding site" description="axial binding residue" evidence="1">
    <location>
        <position position="86"/>
    </location>
    <ligand>
        <name>heme b</name>
        <dbReference type="ChEBI" id="CHEBI:60344"/>
        <label>2</label>
    </ligand>
    <ligandPart>
        <name>Fe</name>
        <dbReference type="ChEBI" id="CHEBI:18248"/>
    </ligandPart>
</feature>
<feature type="binding site" description="axial binding residue" evidence="1">
    <location>
        <position position="100"/>
    </location>
    <ligand>
        <name>heme b</name>
        <dbReference type="ChEBI" id="CHEBI:60344"/>
        <label>1</label>
    </ligand>
    <ligandPart>
        <name>Fe</name>
        <dbReference type="ChEBI" id="CHEBI:18248"/>
    </ligandPart>
</feature>
<feature type="binding site" description="axial binding residue" evidence="1">
    <location>
        <position position="187"/>
    </location>
    <ligand>
        <name>heme b</name>
        <dbReference type="ChEBI" id="CHEBI:60344"/>
        <label>2</label>
    </ligand>
    <ligandPart>
        <name>Fe</name>
        <dbReference type="ChEBI" id="CHEBI:18248"/>
    </ligandPart>
</feature>
<feature type="binding site" description="axial binding residue" evidence="1">
    <location>
        <position position="202"/>
    </location>
    <ligand>
        <name>heme b</name>
        <dbReference type="ChEBI" id="CHEBI:60344"/>
        <label>1</label>
    </ligand>
    <ligandPart>
        <name>Fe</name>
        <dbReference type="ChEBI" id="CHEBI:18248"/>
    </ligandPart>
</feature>